<dbReference type="EMBL" id="CP000414">
    <property type="protein sequence ID" value="ABJ61326.1"/>
    <property type="molecule type" value="Genomic_DNA"/>
</dbReference>
<dbReference type="RefSeq" id="WP_002816040.1">
    <property type="nucleotide sequence ID" value="NC_008531.1"/>
</dbReference>
<dbReference type="SMR" id="Q03ZP6"/>
<dbReference type="EnsemblBacteria" id="ABJ61326">
    <property type="protein sequence ID" value="ABJ61326"/>
    <property type="gene ID" value="LEUM_0195"/>
</dbReference>
<dbReference type="GeneID" id="97504982"/>
<dbReference type="KEGG" id="lme:LEUM_0195"/>
<dbReference type="eggNOG" id="COG0051">
    <property type="taxonomic scope" value="Bacteria"/>
</dbReference>
<dbReference type="HOGENOM" id="CLU_122625_1_3_9"/>
<dbReference type="Proteomes" id="UP000000362">
    <property type="component" value="Chromosome"/>
</dbReference>
<dbReference type="GO" id="GO:1990904">
    <property type="term" value="C:ribonucleoprotein complex"/>
    <property type="evidence" value="ECO:0007669"/>
    <property type="project" value="UniProtKB-KW"/>
</dbReference>
<dbReference type="GO" id="GO:0005840">
    <property type="term" value="C:ribosome"/>
    <property type="evidence" value="ECO:0007669"/>
    <property type="project" value="UniProtKB-KW"/>
</dbReference>
<dbReference type="GO" id="GO:0003735">
    <property type="term" value="F:structural constituent of ribosome"/>
    <property type="evidence" value="ECO:0007669"/>
    <property type="project" value="InterPro"/>
</dbReference>
<dbReference type="GO" id="GO:0000049">
    <property type="term" value="F:tRNA binding"/>
    <property type="evidence" value="ECO:0007669"/>
    <property type="project" value="UniProtKB-UniRule"/>
</dbReference>
<dbReference type="GO" id="GO:0006412">
    <property type="term" value="P:translation"/>
    <property type="evidence" value="ECO:0007669"/>
    <property type="project" value="UniProtKB-UniRule"/>
</dbReference>
<dbReference type="FunFam" id="3.30.70.600:FF:000001">
    <property type="entry name" value="30S ribosomal protein S10"/>
    <property type="match status" value="1"/>
</dbReference>
<dbReference type="Gene3D" id="3.30.70.600">
    <property type="entry name" value="Ribosomal protein S10 domain"/>
    <property type="match status" value="1"/>
</dbReference>
<dbReference type="HAMAP" id="MF_00508">
    <property type="entry name" value="Ribosomal_uS10"/>
    <property type="match status" value="1"/>
</dbReference>
<dbReference type="InterPro" id="IPR001848">
    <property type="entry name" value="Ribosomal_uS10"/>
</dbReference>
<dbReference type="InterPro" id="IPR018268">
    <property type="entry name" value="Ribosomal_uS10_CS"/>
</dbReference>
<dbReference type="InterPro" id="IPR027486">
    <property type="entry name" value="Ribosomal_uS10_dom"/>
</dbReference>
<dbReference type="InterPro" id="IPR036838">
    <property type="entry name" value="Ribosomal_uS10_dom_sf"/>
</dbReference>
<dbReference type="NCBIfam" id="NF001861">
    <property type="entry name" value="PRK00596.1"/>
    <property type="match status" value="1"/>
</dbReference>
<dbReference type="NCBIfam" id="TIGR01049">
    <property type="entry name" value="rpsJ_bact"/>
    <property type="match status" value="1"/>
</dbReference>
<dbReference type="PANTHER" id="PTHR11700">
    <property type="entry name" value="30S RIBOSOMAL PROTEIN S10 FAMILY MEMBER"/>
    <property type="match status" value="1"/>
</dbReference>
<dbReference type="Pfam" id="PF00338">
    <property type="entry name" value="Ribosomal_S10"/>
    <property type="match status" value="1"/>
</dbReference>
<dbReference type="PRINTS" id="PR00971">
    <property type="entry name" value="RIBOSOMALS10"/>
</dbReference>
<dbReference type="SMART" id="SM01403">
    <property type="entry name" value="Ribosomal_S10"/>
    <property type="match status" value="1"/>
</dbReference>
<dbReference type="SUPFAM" id="SSF54999">
    <property type="entry name" value="Ribosomal protein S10"/>
    <property type="match status" value="1"/>
</dbReference>
<dbReference type="PROSITE" id="PS00361">
    <property type="entry name" value="RIBOSOMAL_S10"/>
    <property type="match status" value="1"/>
</dbReference>
<organism>
    <name type="scientific">Leuconostoc mesenteroides subsp. mesenteroides (strain ATCC 8293 / DSM 20343 / BCRC 11652 / CCM 1803 / JCM 6124 / NCDO 523 / NBRC 100496 / NCIMB 8023 / NCTC 12954 / NRRL B-1118 / 37Y)</name>
    <dbReference type="NCBI Taxonomy" id="203120"/>
    <lineage>
        <taxon>Bacteria</taxon>
        <taxon>Bacillati</taxon>
        <taxon>Bacillota</taxon>
        <taxon>Bacilli</taxon>
        <taxon>Lactobacillales</taxon>
        <taxon>Lactobacillaceae</taxon>
        <taxon>Leuconostoc</taxon>
    </lineage>
</organism>
<protein>
    <recommendedName>
        <fullName evidence="1">Small ribosomal subunit protein uS10</fullName>
    </recommendedName>
    <alternativeName>
        <fullName evidence="2">30S ribosomal protein S10</fullName>
    </alternativeName>
</protein>
<name>RS10_LEUMM</name>
<keyword id="KW-1185">Reference proteome</keyword>
<keyword id="KW-0687">Ribonucleoprotein</keyword>
<keyword id="KW-0689">Ribosomal protein</keyword>
<accession>Q03ZP6</accession>
<proteinExistence type="inferred from homology"/>
<feature type="chain" id="PRO_1000015045" description="Small ribosomal subunit protein uS10">
    <location>
        <begin position="1"/>
        <end position="102"/>
    </location>
</feature>
<comment type="function">
    <text evidence="1">Involved in the binding of tRNA to the ribosomes.</text>
</comment>
<comment type="subunit">
    <text evidence="1">Part of the 30S ribosomal subunit.</text>
</comment>
<comment type="similarity">
    <text evidence="1">Belongs to the universal ribosomal protein uS10 family.</text>
</comment>
<sequence length="102" mass="11763">MAQKKIRIRLKAYEHRILDQSAEKIVETAKRTGAEIAGPIPLPTERTLYTILRSPHKHKDSREQFEMRTHKRLIDIVNPTDKTVDALRKLELPSGVAIEIKL</sequence>
<gene>
    <name evidence="1" type="primary">rpsJ</name>
    <name type="ordered locus">LEUM_0195</name>
</gene>
<reference key="1">
    <citation type="journal article" date="2006" name="Proc. Natl. Acad. Sci. U.S.A.">
        <title>Comparative genomics of the lactic acid bacteria.</title>
        <authorList>
            <person name="Makarova K.S."/>
            <person name="Slesarev A."/>
            <person name="Wolf Y.I."/>
            <person name="Sorokin A."/>
            <person name="Mirkin B."/>
            <person name="Koonin E.V."/>
            <person name="Pavlov A."/>
            <person name="Pavlova N."/>
            <person name="Karamychev V."/>
            <person name="Polouchine N."/>
            <person name="Shakhova V."/>
            <person name="Grigoriev I."/>
            <person name="Lou Y."/>
            <person name="Rohksar D."/>
            <person name="Lucas S."/>
            <person name="Huang K."/>
            <person name="Goodstein D.M."/>
            <person name="Hawkins T."/>
            <person name="Plengvidhya V."/>
            <person name="Welker D."/>
            <person name="Hughes J."/>
            <person name="Goh Y."/>
            <person name="Benson A."/>
            <person name="Baldwin K."/>
            <person name="Lee J.-H."/>
            <person name="Diaz-Muniz I."/>
            <person name="Dosti B."/>
            <person name="Smeianov V."/>
            <person name="Wechter W."/>
            <person name="Barabote R."/>
            <person name="Lorca G."/>
            <person name="Altermann E."/>
            <person name="Barrangou R."/>
            <person name="Ganesan B."/>
            <person name="Xie Y."/>
            <person name="Rawsthorne H."/>
            <person name="Tamir D."/>
            <person name="Parker C."/>
            <person name="Breidt F."/>
            <person name="Broadbent J.R."/>
            <person name="Hutkins R."/>
            <person name="O'Sullivan D."/>
            <person name="Steele J."/>
            <person name="Unlu G."/>
            <person name="Saier M.H. Jr."/>
            <person name="Klaenhammer T."/>
            <person name="Richardson P."/>
            <person name="Kozyavkin S."/>
            <person name="Weimer B.C."/>
            <person name="Mills D.A."/>
        </authorList>
    </citation>
    <scope>NUCLEOTIDE SEQUENCE [LARGE SCALE GENOMIC DNA]</scope>
    <source>
        <strain>ATCC 8293 / DSM 20343 / BCRC 11652 / CCM 1803 / JCM 6124 / NCDO 523 / NBRC 100496 / NCIMB 8023 / NCTC 12954 / NRRL B-1118 / 37Y</strain>
    </source>
</reference>
<evidence type="ECO:0000255" key="1">
    <source>
        <dbReference type="HAMAP-Rule" id="MF_00508"/>
    </source>
</evidence>
<evidence type="ECO:0000305" key="2"/>